<dbReference type="EC" id="3.6.5.n1" evidence="1"/>
<dbReference type="EMBL" id="CP000482">
    <property type="protein sequence ID" value="ABK99938.1"/>
    <property type="molecule type" value="Genomic_DNA"/>
</dbReference>
<dbReference type="RefSeq" id="WP_011736194.1">
    <property type="nucleotide sequence ID" value="NC_008609.1"/>
</dbReference>
<dbReference type="SMR" id="A1ARG8"/>
<dbReference type="STRING" id="338966.Ppro_2331"/>
<dbReference type="KEGG" id="ppd:Ppro_2331"/>
<dbReference type="eggNOG" id="COG0481">
    <property type="taxonomic scope" value="Bacteria"/>
</dbReference>
<dbReference type="HOGENOM" id="CLU_009995_3_3_7"/>
<dbReference type="OrthoDB" id="9801591at2"/>
<dbReference type="Proteomes" id="UP000006732">
    <property type="component" value="Chromosome"/>
</dbReference>
<dbReference type="GO" id="GO:0005886">
    <property type="term" value="C:plasma membrane"/>
    <property type="evidence" value="ECO:0007669"/>
    <property type="project" value="UniProtKB-SubCell"/>
</dbReference>
<dbReference type="GO" id="GO:0005525">
    <property type="term" value="F:GTP binding"/>
    <property type="evidence" value="ECO:0007669"/>
    <property type="project" value="UniProtKB-UniRule"/>
</dbReference>
<dbReference type="GO" id="GO:0003924">
    <property type="term" value="F:GTPase activity"/>
    <property type="evidence" value="ECO:0007669"/>
    <property type="project" value="UniProtKB-UniRule"/>
</dbReference>
<dbReference type="GO" id="GO:0043022">
    <property type="term" value="F:ribosome binding"/>
    <property type="evidence" value="ECO:0007669"/>
    <property type="project" value="UniProtKB-UniRule"/>
</dbReference>
<dbReference type="GO" id="GO:0003746">
    <property type="term" value="F:translation elongation factor activity"/>
    <property type="evidence" value="ECO:0007669"/>
    <property type="project" value="UniProtKB-UniRule"/>
</dbReference>
<dbReference type="GO" id="GO:0045727">
    <property type="term" value="P:positive regulation of translation"/>
    <property type="evidence" value="ECO:0007669"/>
    <property type="project" value="UniProtKB-UniRule"/>
</dbReference>
<dbReference type="CDD" id="cd03699">
    <property type="entry name" value="EF4_II"/>
    <property type="match status" value="1"/>
</dbReference>
<dbReference type="CDD" id="cd16260">
    <property type="entry name" value="EF4_III"/>
    <property type="match status" value="1"/>
</dbReference>
<dbReference type="CDD" id="cd01890">
    <property type="entry name" value="LepA"/>
    <property type="match status" value="1"/>
</dbReference>
<dbReference type="CDD" id="cd03709">
    <property type="entry name" value="lepA_C"/>
    <property type="match status" value="1"/>
</dbReference>
<dbReference type="FunFam" id="3.40.50.300:FF:000078">
    <property type="entry name" value="Elongation factor 4"/>
    <property type="match status" value="1"/>
</dbReference>
<dbReference type="FunFam" id="2.40.30.10:FF:000015">
    <property type="entry name" value="Translation factor GUF1, mitochondrial"/>
    <property type="match status" value="1"/>
</dbReference>
<dbReference type="FunFam" id="3.30.70.240:FF:000007">
    <property type="entry name" value="Translation factor GUF1, mitochondrial"/>
    <property type="match status" value="1"/>
</dbReference>
<dbReference type="FunFam" id="3.30.70.2570:FF:000001">
    <property type="entry name" value="Translation factor GUF1, mitochondrial"/>
    <property type="match status" value="1"/>
</dbReference>
<dbReference type="FunFam" id="3.30.70.870:FF:000004">
    <property type="entry name" value="Translation factor GUF1, mitochondrial"/>
    <property type="match status" value="1"/>
</dbReference>
<dbReference type="Gene3D" id="3.30.70.240">
    <property type="match status" value="1"/>
</dbReference>
<dbReference type="Gene3D" id="3.30.70.2570">
    <property type="entry name" value="Elongation factor 4, C-terminal domain"/>
    <property type="match status" value="1"/>
</dbReference>
<dbReference type="Gene3D" id="3.30.70.870">
    <property type="entry name" value="Elongation Factor G (Translational Gtpase), domain 3"/>
    <property type="match status" value="1"/>
</dbReference>
<dbReference type="Gene3D" id="3.40.50.300">
    <property type="entry name" value="P-loop containing nucleotide triphosphate hydrolases"/>
    <property type="match status" value="1"/>
</dbReference>
<dbReference type="Gene3D" id="2.40.30.10">
    <property type="entry name" value="Translation factors"/>
    <property type="match status" value="1"/>
</dbReference>
<dbReference type="HAMAP" id="MF_00071">
    <property type="entry name" value="LepA"/>
    <property type="match status" value="1"/>
</dbReference>
<dbReference type="InterPro" id="IPR006297">
    <property type="entry name" value="EF-4"/>
</dbReference>
<dbReference type="InterPro" id="IPR035647">
    <property type="entry name" value="EFG_III/V"/>
</dbReference>
<dbReference type="InterPro" id="IPR000640">
    <property type="entry name" value="EFG_V-like"/>
</dbReference>
<dbReference type="InterPro" id="IPR004161">
    <property type="entry name" value="EFTu-like_2"/>
</dbReference>
<dbReference type="InterPro" id="IPR031157">
    <property type="entry name" value="G_TR_CS"/>
</dbReference>
<dbReference type="InterPro" id="IPR038363">
    <property type="entry name" value="LepA_C_sf"/>
</dbReference>
<dbReference type="InterPro" id="IPR013842">
    <property type="entry name" value="LepA_CTD"/>
</dbReference>
<dbReference type="InterPro" id="IPR035654">
    <property type="entry name" value="LepA_IV"/>
</dbReference>
<dbReference type="InterPro" id="IPR027417">
    <property type="entry name" value="P-loop_NTPase"/>
</dbReference>
<dbReference type="InterPro" id="IPR005225">
    <property type="entry name" value="Small_GTP-bd"/>
</dbReference>
<dbReference type="InterPro" id="IPR000795">
    <property type="entry name" value="T_Tr_GTP-bd_dom"/>
</dbReference>
<dbReference type="InterPro" id="IPR009000">
    <property type="entry name" value="Transl_B-barrel_sf"/>
</dbReference>
<dbReference type="NCBIfam" id="TIGR01393">
    <property type="entry name" value="lepA"/>
    <property type="match status" value="1"/>
</dbReference>
<dbReference type="NCBIfam" id="TIGR00231">
    <property type="entry name" value="small_GTP"/>
    <property type="match status" value="1"/>
</dbReference>
<dbReference type="PANTHER" id="PTHR43512:SF4">
    <property type="entry name" value="TRANSLATION FACTOR GUF1 HOMOLOG, CHLOROPLASTIC"/>
    <property type="match status" value="1"/>
</dbReference>
<dbReference type="PANTHER" id="PTHR43512">
    <property type="entry name" value="TRANSLATION FACTOR GUF1-RELATED"/>
    <property type="match status" value="1"/>
</dbReference>
<dbReference type="Pfam" id="PF00679">
    <property type="entry name" value="EFG_C"/>
    <property type="match status" value="1"/>
</dbReference>
<dbReference type="Pfam" id="PF00009">
    <property type="entry name" value="GTP_EFTU"/>
    <property type="match status" value="1"/>
</dbReference>
<dbReference type="Pfam" id="PF03144">
    <property type="entry name" value="GTP_EFTU_D2"/>
    <property type="match status" value="1"/>
</dbReference>
<dbReference type="Pfam" id="PF06421">
    <property type="entry name" value="LepA_C"/>
    <property type="match status" value="1"/>
</dbReference>
<dbReference type="PRINTS" id="PR00315">
    <property type="entry name" value="ELONGATNFCT"/>
</dbReference>
<dbReference type="SUPFAM" id="SSF54980">
    <property type="entry name" value="EF-G C-terminal domain-like"/>
    <property type="match status" value="2"/>
</dbReference>
<dbReference type="SUPFAM" id="SSF52540">
    <property type="entry name" value="P-loop containing nucleoside triphosphate hydrolases"/>
    <property type="match status" value="1"/>
</dbReference>
<dbReference type="SUPFAM" id="SSF50447">
    <property type="entry name" value="Translation proteins"/>
    <property type="match status" value="1"/>
</dbReference>
<dbReference type="PROSITE" id="PS00301">
    <property type="entry name" value="G_TR_1"/>
    <property type="match status" value="1"/>
</dbReference>
<dbReference type="PROSITE" id="PS51722">
    <property type="entry name" value="G_TR_2"/>
    <property type="match status" value="1"/>
</dbReference>
<name>LEPA_PELPD</name>
<proteinExistence type="inferred from homology"/>
<organism>
    <name type="scientific">Pelobacter propionicus (strain DSM 2379 / NBRC 103807 / OttBd1)</name>
    <dbReference type="NCBI Taxonomy" id="338966"/>
    <lineage>
        <taxon>Bacteria</taxon>
        <taxon>Pseudomonadati</taxon>
        <taxon>Thermodesulfobacteriota</taxon>
        <taxon>Desulfuromonadia</taxon>
        <taxon>Desulfuromonadales</taxon>
        <taxon>Desulfuromonadaceae</taxon>
        <taxon>Pelobacter</taxon>
    </lineage>
</organism>
<protein>
    <recommendedName>
        <fullName evidence="1">Elongation factor 4</fullName>
        <shortName evidence="1">EF-4</shortName>
        <ecNumber evidence="1">3.6.5.n1</ecNumber>
    </recommendedName>
    <alternativeName>
        <fullName evidence="1">Ribosomal back-translocase LepA</fullName>
    </alternativeName>
</protein>
<accession>A1ARG8</accession>
<reference key="1">
    <citation type="submission" date="2006-10" db="EMBL/GenBank/DDBJ databases">
        <title>Complete sequence of chromosome of Pelobacter propionicus DSM 2379.</title>
        <authorList>
            <consortium name="US DOE Joint Genome Institute"/>
            <person name="Copeland A."/>
            <person name="Lucas S."/>
            <person name="Lapidus A."/>
            <person name="Barry K."/>
            <person name="Detter J.C."/>
            <person name="Glavina del Rio T."/>
            <person name="Hammon N."/>
            <person name="Israni S."/>
            <person name="Dalin E."/>
            <person name="Tice H."/>
            <person name="Pitluck S."/>
            <person name="Saunders E."/>
            <person name="Brettin T."/>
            <person name="Bruce D."/>
            <person name="Han C."/>
            <person name="Tapia R."/>
            <person name="Schmutz J."/>
            <person name="Larimer F."/>
            <person name="Land M."/>
            <person name="Hauser L."/>
            <person name="Kyrpides N."/>
            <person name="Kim E."/>
            <person name="Lovley D."/>
            <person name="Richardson P."/>
        </authorList>
    </citation>
    <scope>NUCLEOTIDE SEQUENCE [LARGE SCALE GENOMIC DNA]</scope>
    <source>
        <strain>DSM 2379 / NBRC 103807 / OttBd1</strain>
    </source>
</reference>
<comment type="function">
    <text evidence="1">Required for accurate and efficient protein synthesis under certain stress conditions. May act as a fidelity factor of the translation reaction, by catalyzing a one-codon backward translocation of tRNAs on improperly translocated ribosomes. Back-translocation proceeds from a post-translocation (POST) complex to a pre-translocation (PRE) complex, thus giving elongation factor G a second chance to translocate the tRNAs correctly. Binds to ribosomes in a GTP-dependent manner.</text>
</comment>
<comment type="catalytic activity">
    <reaction evidence="1">
        <text>GTP + H2O = GDP + phosphate + H(+)</text>
        <dbReference type="Rhea" id="RHEA:19669"/>
        <dbReference type="ChEBI" id="CHEBI:15377"/>
        <dbReference type="ChEBI" id="CHEBI:15378"/>
        <dbReference type="ChEBI" id="CHEBI:37565"/>
        <dbReference type="ChEBI" id="CHEBI:43474"/>
        <dbReference type="ChEBI" id="CHEBI:58189"/>
        <dbReference type="EC" id="3.6.5.n1"/>
    </reaction>
</comment>
<comment type="subcellular location">
    <subcellularLocation>
        <location evidence="1">Cell inner membrane</location>
        <topology evidence="1">Peripheral membrane protein</topology>
        <orientation evidence="1">Cytoplasmic side</orientation>
    </subcellularLocation>
</comment>
<comment type="similarity">
    <text evidence="1">Belongs to the TRAFAC class translation factor GTPase superfamily. Classic translation factor GTPase family. LepA subfamily.</text>
</comment>
<feature type="chain" id="PRO_1000032030" description="Elongation factor 4">
    <location>
        <begin position="1"/>
        <end position="598"/>
    </location>
</feature>
<feature type="domain" description="tr-type G">
    <location>
        <begin position="4"/>
        <end position="186"/>
    </location>
</feature>
<feature type="binding site" evidence="1">
    <location>
        <begin position="16"/>
        <end position="21"/>
    </location>
    <ligand>
        <name>GTP</name>
        <dbReference type="ChEBI" id="CHEBI:37565"/>
    </ligand>
</feature>
<feature type="binding site" evidence="1">
    <location>
        <begin position="133"/>
        <end position="136"/>
    </location>
    <ligand>
        <name>GTP</name>
        <dbReference type="ChEBI" id="CHEBI:37565"/>
    </ligand>
</feature>
<sequence>MDISRLRNFSIIAHIDHGKSTLADRLLEFTGALSQREMQNQFLDKMDLERERGITIKAQTVRLTYRADDGNDYVLNLIDTPGHVDFTYEVSRSLAACEGGLLVVDASQGVEAQTLANVYLALDINLEVFPVLNKIDLPAADPERVIQEIEEIIGIDAHDAVLASAKEGIGTHEILEEIVKKIPPPKGDASAPLRALLFDSWYDQYQGVIILVRIFDGTLKKGDRIQLMATRSSFEALKVGVFAPTMVETQQLAAGEVGFVIAGIKEVADAKVGDTVTLQHRPCSSALEGFKEVKPMVFSGLYPIDTVQYEQLRDALAKLKLNDSSFSYDPETSLALGFGFRCGFLGLLHMEIIQERLEREFGLDLITTAPTVVYRVHRVTGEVQSIESANQMPELQHVEYLEEPFILAHIHVPNEFVGGVLALCEDKRGVQREIKYLTQNRVMIIYELPLNEIVLDFYDRLKSITKGYASLDYEHLDYRKSDLVRMNVMINGEVVDALSLILHRDKAYYRGRDLVSKMKELIPRQMFEVAIQAAIGNKIIARETVKAMRKDVLAKCYGGDITRKRKLLEKQKEGKKRMKNVGNVELPQDAFLAILKVE</sequence>
<evidence type="ECO:0000255" key="1">
    <source>
        <dbReference type="HAMAP-Rule" id="MF_00071"/>
    </source>
</evidence>
<gene>
    <name evidence="1" type="primary">lepA</name>
    <name type="ordered locus">Ppro_2331</name>
</gene>
<keyword id="KW-0997">Cell inner membrane</keyword>
<keyword id="KW-1003">Cell membrane</keyword>
<keyword id="KW-0342">GTP-binding</keyword>
<keyword id="KW-0378">Hydrolase</keyword>
<keyword id="KW-0472">Membrane</keyword>
<keyword id="KW-0547">Nucleotide-binding</keyword>
<keyword id="KW-0648">Protein biosynthesis</keyword>
<keyword id="KW-1185">Reference proteome</keyword>